<gene>
    <name evidence="1" type="primary">rplO</name>
    <name type="ordered locus">PputW619_4730</name>
</gene>
<evidence type="ECO:0000255" key="1">
    <source>
        <dbReference type="HAMAP-Rule" id="MF_01341"/>
    </source>
</evidence>
<evidence type="ECO:0000256" key="2">
    <source>
        <dbReference type="SAM" id="MobiDB-lite"/>
    </source>
</evidence>
<evidence type="ECO:0000305" key="3"/>
<feature type="chain" id="PRO_1000142863" description="Large ribosomal subunit protein uL15">
    <location>
        <begin position="1"/>
        <end position="144"/>
    </location>
</feature>
<feature type="region of interest" description="Disordered" evidence="2">
    <location>
        <begin position="1"/>
        <end position="57"/>
    </location>
</feature>
<feature type="compositionally biased region" description="Gly residues" evidence="2">
    <location>
        <begin position="21"/>
        <end position="31"/>
    </location>
</feature>
<sequence length="144" mass="15189">MKLNDLSPAPGSRREKHRPGRGIGSGLGKTGGRGHKGQTSRSGGSIAPGFEGGQQPLHRRLPKFGFVSLKAMDRAEVRLSELAKVEGDVISVQSLKDANVINQHIQRVKIMLSGEVTRAVTIKGIAATKGARAAIEAAGGKFEE</sequence>
<dbReference type="EMBL" id="CP000949">
    <property type="protein sequence ID" value="ACA75206.1"/>
    <property type="molecule type" value="Genomic_DNA"/>
</dbReference>
<dbReference type="SMR" id="B1JAJ3"/>
<dbReference type="STRING" id="390235.PputW619_4730"/>
<dbReference type="KEGG" id="ppw:PputW619_4730"/>
<dbReference type="eggNOG" id="COG0200">
    <property type="taxonomic scope" value="Bacteria"/>
</dbReference>
<dbReference type="HOGENOM" id="CLU_055188_4_2_6"/>
<dbReference type="OrthoDB" id="9810293at2"/>
<dbReference type="GO" id="GO:0022625">
    <property type="term" value="C:cytosolic large ribosomal subunit"/>
    <property type="evidence" value="ECO:0007669"/>
    <property type="project" value="TreeGrafter"/>
</dbReference>
<dbReference type="GO" id="GO:0019843">
    <property type="term" value="F:rRNA binding"/>
    <property type="evidence" value="ECO:0007669"/>
    <property type="project" value="UniProtKB-UniRule"/>
</dbReference>
<dbReference type="GO" id="GO:0003735">
    <property type="term" value="F:structural constituent of ribosome"/>
    <property type="evidence" value="ECO:0007669"/>
    <property type="project" value="InterPro"/>
</dbReference>
<dbReference type="GO" id="GO:0006412">
    <property type="term" value="P:translation"/>
    <property type="evidence" value="ECO:0007669"/>
    <property type="project" value="UniProtKB-UniRule"/>
</dbReference>
<dbReference type="FunFam" id="3.100.10.10:FF:000003">
    <property type="entry name" value="50S ribosomal protein L15"/>
    <property type="match status" value="1"/>
</dbReference>
<dbReference type="Gene3D" id="3.100.10.10">
    <property type="match status" value="1"/>
</dbReference>
<dbReference type="HAMAP" id="MF_01341">
    <property type="entry name" value="Ribosomal_uL15"/>
    <property type="match status" value="1"/>
</dbReference>
<dbReference type="InterPro" id="IPR030878">
    <property type="entry name" value="Ribosomal_uL15"/>
</dbReference>
<dbReference type="InterPro" id="IPR021131">
    <property type="entry name" value="Ribosomal_uL15/eL18"/>
</dbReference>
<dbReference type="InterPro" id="IPR036227">
    <property type="entry name" value="Ribosomal_uL15/eL18_sf"/>
</dbReference>
<dbReference type="InterPro" id="IPR005749">
    <property type="entry name" value="Ribosomal_uL15_bac-type"/>
</dbReference>
<dbReference type="InterPro" id="IPR001196">
    <property type="entry name" value="Ribosomal_uL15_CS"/>
</dbReference>
<dbReference type="NCBIfam" id="TIGR01071">
    <property type="entry name" value="rplO_bact"/>
    <property type="match status" value="1"/>
</dbReference>
<dbReference type="PANTHER" id="PTHR12934">
    <property type="entry name" value="50S RIBOSOMAL PROTEIN L15"/>
    <property type="match status" value="1"/>
</dbReference>
<dbReference type="PANTHER" id="PTHR12934:SF11">
    <property type="entry name" value="LARGE RIBOSOMAL SUBUNIT PROTEIN UL15M"/>
    <property type="match status" value="1"/>
</dbReference>
<dbReference type="Pfam" id="PF00828">
    <property type="entry name" value="Ribosomal_L27A"/>
    <property type="match status" value="1"/>
</dbReference>
<dbReference type="SUPFAM" id="SSF52080">
    <property type="entry name" value="Ribosomal proteins L15p and L18e"/>
    <property type="match status" value="1"/>
</dbReference>
<dbReference type="PROSITE" id="PS00475">
    <property type="entry name" value="RIBOSOMAL_L15"/>
    <property type="match status" value="1"/>
</dbReference>
<organism>
    <name type="scientific">Pseudomonas putida (strain W619)</name>
    <dbReference type="NCBI Taxonomy" id="390235"/>
    <lineage>
        <taxon>Bacteria</taxon>
        <taxon>Pseudomonadati</taxon>
        <taxon>Pseudomonadota</taxon>
        <taxon>Gammaproteobacteria</taxon>
        <taxon>Pseudomonadales</taxon>
        <taxon>Pseudomonadaceae</taxon>
        <taxon>Pseudomonas</taxon>
    </lineage>
</organism>
<keyword id="KW-0687">Ribonucleoprotein</keyword>
<keyword id="KW-0689">Ribosomal protein</keyword>
<keyword id="KW-0694">RNA-binding</keyword>
<keyword id="KW-0699">rRNA-binding</keyword>
<proteinExistence type="inferred from homology"/>
<reference key="1">
    <citation type="submission" date="2008-02" db="EMBL/GenBank/DDBJ databases">
        <title>Complete sequence of Pseudomonas putida W619.</title>
        <authorList>
            <person name="Copeland A."/>
            <person name="Lucas S."/>
            <person name="Lapidus A."/>
            <person name="Barry K."/>
            <person name="Detter J.C."/>
            <person name="Glavina del Rio T."/>
            <person name="Dalin E."/>
            <person name="Tice H."/>
            <person name="Pitluck S."/>
            <person name="Chain P."/>
            <person name="Malfatti S."/>
            <person name="Shin M."/>
            <person name="Vergez L."/>
            <person name="Schmutz J."/>
            <person name="Larimer F."/>
            <person name="Land M."/>
            <person name="Hauser L."/>
            <person name="Kyrpides N."/>
            <person name="Kim E."/>
            <person name="Taghavi S."/>
            <person name="Vangronsveld D."/>
            <person name="van der Lelie D."/>
            <person name="Richardson P."/>
        </authorList>
    </citation>
    <scope>NUCLEOTIDE SEQUENCE [LARGE SCALE GENOMIC DNA]</scope>
    <source>
        <strain>W619</strain>
    </source>
</reference>
<accession>B1JAJ3</accession>
<comment type="function">
    <text evidence="1">Binds to the 23S rRNA.</text>
</comment>
<comment type="subunit">
    <text evidence="1">Part of the 50S ribosomal subunit.</text>
</comment>
<comment type="similarity">
    <text evidence="1">Belongs to the universal ribosomal protein uL15 family.</text>
</comment>
<protein>
    <recommendedName>
        <fullName evidence="1">Large ribosomal subunit protein uL15</fullName>
    </recommendedName>
    <alternativeName>
        <fullName evidence="3">50S ribosomal protein L15</fullName>
    </alternativeName>
</protein>
<name>RL15_PSEPW</name>